<protein>
    <recommendedName>
        <fullName>Protein cab-1</fullName>
    </recommendedName>
</protein>
<comment type="subunit">
    <text>Binds to the RAB3 GDP/GTP exchange factor aex-3.</text>
</comment>
<comment type="subcellular location">
    <subcellularLocation>
        <location evidence="3">Membrane</location>
        <topology evidence="3">Single-pass membrane protein</topology>
    </subcellularLocation>
</comment>
<comment type="tissue specificity">
    <text>Expressed in a variety of neurons.</text>
</comment>
<comment type="similarity">
    <text evidence="3">Belongs to the NPDC1/cab-1 family.</text>
</comment>
<gene>
    <name type="primary">cab-1</name>
    <name type="ORF">C23H4.1</name>
</gene>
<accession>Q93249</accession>
<accession>P90751</accession>
<sequence length="425" mass="47224">MRYTFSDEKKATTTTTSRAKSQARLLNSASYRRAARTTLRHSYGMGMWRAVALLACLSATHAALFTEGGAVQNGKDNKANKYVEFAHDDKINKEDLLKYYGKEVEQYKDDDSYMEYLIEYMKSHPVPAQFPNFEQEAEQEHQDELNQWLEQLMNEQELLEPANAAVKDAEQKAPLAPVHHKQVAQKPAQEPFDLDDLLRGELMLENEIAKESELKKTQEKLSEQTPSAKANVESLESAMQTATGEPQVPQKKGQNEFVSFVEQEPQPAKQTISSQTVDKRRLATSAEYSGSAPRYSSSSLLLLAVGTVMCVGLIGTVAGGTYYYKNNRRTETPDDGEYAPYAGTGPGFRKNKGNKGDETLAYKAQLHQYQQAKQKIICGEDAPGIIESDGEDGADEENNYSVYECPGLAPTGDIEVCNPNFAAQP</sequence>
<dbReference type="EMBL" id="AF293976">
    <property type="protein sequence ID" value="AAG17881.1"/>
    <property type="molecule type" value="mRNA"/>
</dbReference>
<dbReference type="EMBL" id="Z78416">
    <property type="protein sequence ID" value="CAB01682.1"/>
    <property type="molecule type" value="Genomic_DNA"/>
</dbReference>
<dbReference type="PIR" id="T19415">
    <property type="entry name" value="T19415"/>
</dbReference>
<dbReference type="RefSeq" id="NP_510036.1">
    <property type="nucleotide sequence ID" value="NM_077635.7"/>
</dbReference>
<dbReference type="BioGRID" id="46288">
    <property type="interactions" value="3"/>
</dbReference>
<dbReference type="FunCoup" id="Q93249">
    <property type="interactions" value="12"/>
</dbReference>
<dbReference type="IntAct" id="Q93249">
    <property type="interactions" value="1"/>
</dbReference>
<dbReference type="STRING" id="6239.C23H4.1.2"/>
<dbReference type="PaxDb" id="6239-C23H4.1.1"/>
<dbReference type="PeptideAtlas" id="Q93249"/>
<dbReference type="EnsemblMetazoa" id="C23H4.1.1">
    <property type="protein sequence ID" value="C23H4.1.1"/>
    <property type="gene ID" value="WBGene00000277"/>
</dbReference>
<dbReference type="EnsemblMetazoa" id="C23H4.1.2">
    <property type="protein sequence ID" value="C23H4.1.2"/>
    <property type="gene ID" value="WBGene00000277"/>
</dbReference>
<dbReference type="GeneID" id="181382"/>
<dbReference type="KEGG" id="cel:CELE_C23H4.1"/>
<dbReference type="UCSC" id="C23H4.1.2">
    <property type="organism name" value="c. elegans"/>
</dbReference>
<dbReference type="AGR" id="WB:WBGene00000277"/>
<dbReference type="CTD" id="181382"/>
<dbReference type="WormBase" id="C23H4.1">
    <property type="protein sequence ID" value="CE17435"/>
    <property type="gene ID" value="WBGene00000277"/>
    <property type="gene designation" value="cab-1"/>
</dbReference>
<dbReference type="eggNOG" id="KOG3884">
    <property type="taxonomic scope" value="Eukaryota"/>
</dbReference>
<dbReference type="GeneTree" id="ENSGT00440000038604"/>
<dbReference type="HOGENOM" id="CLU_638179_0_0_1"/>
<dbReference type="InParanoid" id="Q93249"/>
<dbReference type="OMA" id="YGMGMWR"/>
<dbReference type="OrthoDB" id="6270617at2759"/>
<dbReference type="PRO" id="PR:Q93249"/>
<dbReference type="Proteomes" id="UP000001940">
    <property type="component" value="Chromosome X"/>
</dbReference>
<dbReference type="Bgee" id="WBGene00000277">
    <property type="expression patterns" value="Expressed in larva and 3 other cell types or tissues"/>
</dbReference>
<dbReference type="GO" id="GO:0016020">
    <property type="term" value="C:membrane"/>
    <property type="evidence" value="ECO:0007669"/>
    <property type="project" value="UniProtKB-SubCell"/>
</dbReference>
<dbReference type="GO" id="GO:0045202">
    <property type="term" value="C:synapse"/>
    <property type="evidence" value="ECO:0007669"/>
    <property type="project" value="GOC"/>
</dbReference>
<dbReference type="GO" id="GO:0007268">
    <property type="term" value="P:chemical synaptic transmission"/>
    <property type="evidence" value="ECO:0000315"/>
    <property type="project" value="WormBase"/>
</dbReference>
<dbReference type="GO" id="GO:1905488">
    <property type="term" value="P:positive regulation of anterior/posterior axon guidance"/>
    <property type="evidence" value="ECO:0000316"/>
    <property type="project" value="UniProtKB"/>
</dbReference>
<dbReference type="GO" id="GO:0007419">
    <property type="term" value="P:ventral cord development"/>
    <property type="evidence" value="ECO:0000316"/>
    <property type="project" value="UniProtKB"/>
</dbReference>
<dbReference type="InterPro" id="IPR009635">
    <property type="entry name" value="NPDC1"/>
</dbReference>
<dbReference type="PANTHER" id="PTHR23352:SF2">
    <property type="entry name" value="NEURAL PROLIFERATION DIFFERENTIATION AND CONTROL PROTEIN 1"/>
    <property type="match status" value="1"/>
</dbReference>
<dbReference type="PANTHER" id="PTHR23352">
    <property type="entry name" value="NEURAL PROLIFERATION DIFFERENTIATION AND CONTROL PROTEIN-1 NPDC-1 PROTEIN"/>
    <property type="match status" value="1"/>
</dbReference>
<dbReference type="Pfam" id="PF06809">
    <property type="entry name" value="NPDC1"/>
    <property type="match status" value="1"/>
</dbReference>
<name>CAB1_CAEEL</name>
<keyword id="KW-0472">Membrane</keyword>
<keyword id="KW-1185">Reference proteome</keyword>
<keyword id="KW-0812">Transmembrane</keyword>
<keyword id="KW-1133">Transmembrane helix</keyword>
<evidence type="ECO:0000255" key="1"/>
<evidence type="ECO:0000256" key="2">
    <source>
        <dbReference type="SAM" id="MobiDB-lite"/>
    </source>
</evidence>
<evidence type="ECO:0000305" key="3"/>
<proteinExistence type="evidence at protein level"/>
<feature type="chain" id="PRO_0000089267" description="Protein cab-1">
    <location>
        <begin position="1"/>
        <end position="425"/>
    </location>
</feature>
<feature type="transmembrane region" description="Helical" evidence="1">
    <location>
        <begin position="300"/>
        <end position="320"/>
    </location>
</feature>
<feature type="region of interest" description="Disordered" evidence="2">
    <location>
        <begin position="1"/>
        <end position="20"/>
    </location>
</feature>
<feature type="region of interest" description="AEX-3-binding">
    <location>
        <begin position="205"/>
        <end position="424"/>
    </location>
</feature>
<feature type="region of interest" description="Disordered" evidence="2">
    <location>
        <begin position="214"/>
        <end position="251"/>
    </location>
</feature>
<feature type="region of interest" description="Disordered" evidence="2">
    <location>
        <begin position="334"/>
        <end position="355"/>
    </location>
</feature>
<feature type="compositionally biased region" description="Basic and acidic residues" evidence="2">
    <location>
        <begin position="1"/>
        <end position="11"/>
    </location>
</feature>
<organism>
    <name type="scientific">Caenorhabditis elegans</name>
    <dbReference type="NCBI Taxonomy" id="6239"/>
    <lineage>
        <taxon>Eukaryota</taxon>
        <taxon>Metazoa</taxon>
        <taxon>Ecdysozoa</taxon>
        <taxon>Nematoda</taxon>
        <taxon>Chromadorea</taxon>
        <taxon>Rhabditida</taxon>
        <taxon>Rhabditina</taxon>
        <taxon>Rhabditomorpha</taxon>
        <taxon>Rhabditoidea</taxon>
        <taxon>Rhabditidae</taxon>
        <taxon>Peloderinae</taxon>
        <taxon>Caenorhabditis</taxon>
    </lineage>
</organism>
<reference key="1">
    <citation type="journal article" date="2000" name="EMBO J.">
        <title>The rab3 GDP/GTP exchange factor homolog AEX-3 has a dual function in synaptic transmission.</title>
        <authorList>
            <person name="Iwasaki K."/>
            <person name="Toyonaga R."/>
        </authorList>
    </citation>
    <scope>NUCLEOTIDE SEQUENCE [MRNA]</scope>
    <scope>INTERACTION WITH AEX-3</scope>
    <source>
        <strain>Bristol N2</strain>
    </source>
</reference>
<reference key="2">
    <citation type="journal article" date="1998" name="Science">
        <title>Genome sequence of the nematode C. elegans: a platform for investigating biology.</title>
        <authorList>
            <consortium name="The C. elegans sequencing consortium"/>
        </authorList>
    </citation>
    <scope>NUCLEOTIDE SEQUENCE [LARGE SCALE GENOMIC DNA]</scope>
    <source>
        <strain>Bristol N2</strain>
    </source>
</reference>